<dbReference type="EC" id="3.5.5.1" evidence="2"/>
<dbReference type="EMBL" id="CH408160">
    <property type="protein sequence ID" value="EDK40747.2"/>
    <property type="molecule type" value="Genomic_DNA"/>
</dbReference>
<dbReference type="RefSeq" id="XP_001482890.2">
    <property type="nucleotide sequence ID" value="XM_001482840.1"/>
</dbReference>
<dbReference type="SMR" id="A5DNJ4"/>
<dbReference type="FunCoup" id="A5DNJ4">
    <property type="interactions" value="716"/>
</dbReference>
<dbReference type="STRING" id="294746.A5DNJ4"/>
<dbReference type="GeneID" id="5124984"/>
<dbReference type="KEGG" id="pgu:PGUG_04845"/>
<dbReference type="VEuPathDB" id="FungiDB:PGUG_04845"/>
<dbReference type="eggNOG" id="KOG0805">
    <property type="taxonomic scope" value="Eukaryota"/>
</dbReference>
<dbReference type="HOGENOM" id="CLU_030130_6_0_1"/>
<dbReference type="InParanoid" id="A5DNJ4"/>
<dbReference type="OMA" id="GYPCWIW"/>
<dbReference type="OrthoDB" id="10250282at2759"/>
<dbReference type="Proteomes" id="UP000001997">
    <property type="component" value="Unassembled WGS sequence"/>
</dbReference>
<dbReference type="GO" id="GO:0016836">
    <property type="term" value="F:hydro-lyase activity"/>
    <property type="evidence" value="ECO:0007669"/>
    <property type="project" value="UniProtKB-ARBA"/>
</dbReference>
<dbReference type="GO" id="GO:0000257">
    <property type="term" value="F:nitrilase activity"/>
    <property type="evidence" value="ECO:0007669"/>
    <property type="project" value="UniProtKB-EC"/>
</dbReference>
<dbReference type="CDD" id="cd07564">
    <property type="entry name" value="nitrilases_CHs"/>
    <property type="match status" value="1"/>
</dbReference>
<dbReference type="Gene3D" id="3.60.110.10">
    <property type="entry name" value="Carbon-nitrogen hydrolase"/>
    <property type="match status" value="1"/>
</dbReference>
<dbReference type="InterPro" id="IPR003010">
    <property type="entry name" value="C-N_Hydrolase"/>
</dbReference>
<dbReference type="InterPro" id="IPR036526">
    <property type="entry name" value="C-N_Hydrolase_sf"/>
</dbReference>
<dbReference type="InterPro" id="IPR000132">
    <property type="entry name" value="Nitrilase/CN_hydratase_CS"/>
</dbReference>
<dbReference type="InterPro" id="IPR044149">
    <property type="entry name" value="Nitrilases_CHs"/>
</dbReference>
<dbReference type="PANTHER" id="PTHR46044:SF14">
    <property type="entry name" value="ARYLACETONITRILASE"/>
    <property type="match status" value="1"/>
</dbReference>
<dbReference type="PANTHER" id="PTHR46044">
    <property type="entry name" value="NITRILASE"/>
    <property type="match status" value="1"/>
</dbReference>
<dbReference type="Pfam" id="PF00795">
    <property type="entry name" value="CN_hydrolase"/>
    <property type="match status" value="1"/>
</dbReference>
<dbReference type="SUPFAM" id="SSF56317">
    <property type="entry name" value="Carbon-nitrogen hydrolase"/>
    <property type="match status" value="1"/>
</dbReference>
<dbReference type="PROSITE" id="PS50263">
    <property type="entry name" value="CN_HYDROLASE"/>
    <property type="match status" value="1"/>
</dbReference>
<dbReference type="PROSITE" id="PS00920">
    <property type="entry name" value="NITRIL_CHT_1"/>
    <property type="match status" value="1"/>
</dbReference>
<organism>
    <name type="scientific">Meyerozyma guilliermondii (strain ATCC 6260 / CBS 566 / DSM 6381 / JCM 1539 / NBRC 10279 / NRRL Y-324)</name>
    <name type="common">Yeast</name>
    <name type="synonym">Candida guilliermondii</name>
    <dbReference type="NCBI Taxonomy" id="294746"/>
    <lineage>
        <taxon>Eukaryota</taxon>
        <taxon>Fungi</taxon>
        <taxon>Dikarya</taxon>
        <taxon>Ascomycota</taxon>
        <taxon>Saccharomycotina</taxon>
        <taxon>Pichiomycetes</taxon>
        <taxon>Debaryomycetaceae</taxon>
        <taxon>Meyerozyma</taxon>
    </lineage>
</organism>
<accession>A5DNJ4</accession>
<protein>
    <recommendedName>
        <fullName evidence="3">Nitrilase</fullName>
        <ecNumber evidence="2">3.5.5.1</ecNumber>
    </recommendedName>
    <alternativeName>
        <fullName evidence="3">NitMg</fullName>
    </alternativeName>
</protein>
<keyword id="KW-0378">Hydrolase</keyword>
<keyword id="KW-1185">Reference proteome</keyword>
<gene>
    <name type="ORF">PGUG_04845</name>
</gene>
<name>NIT_PICGU</name>
<sequence>MGAKVKVAVVQAEPVWFNLQETVKRVNELIESAYNKGAELIAFPEVFVPGYPTWIWTNAADLDRNLMYTKNSLTYDSPEFISIIETVKKYPIHVVLGFSEKDQGSLYISQCIIDNTGEIVLKRRKFKPTHVERVIWGDTADSNMKSVVTLNFKEAGPVEVGCLSCWEHMQPLLYYNSAAQHEKIHIGSWPALNDKDLGVYCFTKAGFHGLARAYANQVQSFYLFTSILGQRIQEALPDVKLSPYFEKGAGCGAVFAPDGSQITEDHPDDFDGVIISELDMDKILLQKNLVDIVGHYARPDMVSLSHNRPNTEFVNRK</sequence>
<proteinExistence type="evidence at protein level"/>
<feature type="chain" id="PRO_0000432179" description="Nitrilase">
    <location>
        <begin position="1"/>
        <end position="317"/>
    </location>
</feature>
<feature type="domain" description="CN hydrolase" evidence="1">
    <location>
        <begin position="5"/>
        <end position="280"/>
    </location>
</feature>
<feature type="active site" description="Proton acceptor" evidence="1">
    <location>
        <position position="45"/>
    </location>
</feature>
<feature type="active site" evidence="1">
    <location>
        <position position="125"/>
    </location>
</feature>
<feature type="active site" description="Nucleophile" evidence="1">
    <location>
        <position position="165"/>
    </location>
</feature>
<evidence type="ECO:0000255" key="1">
    <source>
        <dbReference type="PROSITE-ProRule" id="PRU00054"/>
    </source>
</evidence>
<evidence type="ECO:0000269" key="2">
    <source>
    </source>
</evidence>
<evidence type="ECO:0000303" key="3">
    <source>
    </source>
</evidence>
<evidence type="ECO:0000305" key="4"/>
<comment type="function">
    <text evidence="2">Nitrilase that hydrolyzes preferentially 4-cyanopyridine. Is also able to hydrolyze some aliphatic nitriles, such as phenylacetonitrile.</text>
</comment>
<comment type="catalytic activity">
    <reaction evidence="2">
        <text>a nitrile + 2 H2O = a carboxylate + NH4(+)</text>
        <dbReference type="Rhea" id="RHEA:21724"/>
        <dbReference type="ChEBI" id="CHEBI:15377"/>
        <dbReference type="ChEBI" id="CHEBI:18379"/>
        <dbReference type="ChEBI" id="CHEBI:28938"/>
        <dbReference type="ChEBI" id="CHEBI:29067"/>
        <dbReference type="EC" id="3.5.5.1"/>
    </reaction>
</comment>
<comment type="similarity">
    <text evidence="4">Belongs to the carbon-nitrogen hydrolase superfamily. Nitrilase family.</text>
</comment>
<reference key="1">
    <citation type="journal article" date="2009" name="Nature">
        <title>Evolution of pathogenicity and sexual reproduction in eight Candida genomes.</title>
        <authorList>
            <person name="Butler G."/>
            <person name="Rasmussen M.D."/>
            <person name="Lin M.F."/>
            <person name="Santos M.A.S."/>
            <person name="Sakthikumar S."/>
            <person name="Munro C.A."/>
            <person name="Rheinbay E."/>
            <person name="Grabherr M."/>
            <person name="Forche A."/>
            <person name="Reedy J.L."/>
            <person name="Agrafioti I."/>
            <person name="Arnaud M.B."/>
            <person name="Bates S."/>
            <person name="Brown A.J.P."/>
            <person name="Brunke S."/>
            <person name="Costanzo M.C."/>
            <person name="Fitzpatrick D.A."/>
            <person name="de Groot P.W.J."/>
            <person name="Harris D."/>
            <person name="Hoyer L.L."/>
            <person name="Hube B."/>
            <person name="Klis F.M."/>
            <person name="Kodira C."/>
            <person name="Lennard N."/>
            <person name="Logue M.E."/>
            <person name="Martin R."/>
            <person name="Neiman A.M."/>
            <person name="Nikolaou E."/>
            <person name="Quail M.A."/>
            <person name="Quinn J."/>
            <person name="Santos M.C."/>
            <person name="Schmitzberger F.F."/>
            <person name="Sherlock G."/>
            <person name="Shah P."/>
            <person name="Silverstein K.A.T."/>
            <person name="Skrzypek M.S."/>
            <person name="Soll D."/>
            <person name="Staggs R."/>
            <person name="Stansfield I."/>
            <person name="Stumpf M.P.H."/>
            <person name="Sudbery P.E."/>
            <person name="Srikantha T."/>
            <person name="Zeng Q."/>
            <person name="Berman J."/>
            <person name="Berriman M."/>
            <person name="Heitman J."/>
            <person name="Gow N.A.R."/>
            <person name="Lorenz M.C."/>
            <person name="Birren B.W."/>
            <person name="Kellis M."/>
            <person name="Cuomo C.A."/>
        </authorList>
    </citation>
    <scope>NUCLEOTIDE SEQUENCE [LARGE SCALE GENOMIC DNA]</scope>
    <source>
        <strain>ATCC 6260 / CBS 566 / DSM 6381 / JCM 1539 / NBRC 10279 / NRRL Y-324</strain>
    </source>
</reference>
<reference key="2">
    <citation type="journal article" date="2013" name="Mol. Biotechnol.">
        <title>A comparative study of nitrilases identified by genome mining.</title>
        <authorList>
            <person name="Kaplan O."/>
            <person name="Vesela A.B."/>
            <person name="Petrickova A."/>
            <person name="Pasquarelli F."/>
            <person name="Picmanova M."/>
            <person name="Rinagelova A."/>
            <person name="Bhalla T.C."/>
            <person name="Patek M."/>
            <person name="Martinkova L."/>
        </authorList>
    </citation>
    <scope>FUNCTION</scope>
    <scope>CATALYTIC ACTIVITY</scope>
</reference>